<protein>
    <recommendedName>
        <fullName evidence="1">Holliday junction branch migration complex subunit RuvA</fullName>
    </recommendedName>
</protein>
<gene>
    <name evidence="1" type="primary">ruvA</name>
    <name type="ordered locus">VC_1846</name>
</gene>
<sequence>MIGRLRGTLIEKLPPQILIEVGGIGYEVQMPMSCIYELPNIGEEAIIYTHFVVREDAQLLYGFNTVSERALFREVIKANGVGPKMGLAILSGMTANQFVTCVEKEDISTLIKLPGVGKKTAERLVVEMKDRLKGWGAGDLFTPATDAAPVDSTPVIAQNAQEEAMSALLALGYKPPQASKAVSQVAKAGMSSEELIREALKSMV</sequence>
<dbReference type="EMBL" id="AE003852">
    <property type="protein sequence ID" value="AAF94994.1"/>
    <property type="molecule type" value="Genomic_DNA"/>
</dbReference>
<dbReference type="PIR" id="G82149">
    <property type="entry name" value="G82149"/>
</dbReference>
<dbReference type="RefSeq" id="NP_231480.1">
    <property type="nucleotide sequence ID" value="NC_002505.1"/>
</dbReference>
<dbReference type="RefSeq" id="WP_000580359.1">
    <property type="nucleotide sequence ID" value="NZ_LT906614.1"/>
</dbReference>
<dbReference type="SMR" id="Q9KR01"/>
<dbReference type="STRING" id="243277.VC_1846"/>
<dbReference type="DNASU" id="2613600"/>
<dbReference type="EnsemblBacteria" id="AAF94994">
    <property type="protein sequence ID" value="AAF94994"/>
    <property type="gene ID" value="VC_1846"/>
</dbReference>
<dbReference type="KEGG" id="vch:VC_1846"/>
<dbReference type="PATRIC" id="fig|243277.26.peg.1762"/>
<dbReference type="eggNOG" id="COG0632">
    <property type="taxonomic scope" value="Bacteria"/>
</dbReference>
<dbReference type="HOGENOM" id="CLU_087936_0_0_6"/>
<dbReference type="Proteomes" id="UP000000584">
    <property type="component" value="Chromosome 1"/>
</dbReference>
<dbReference type="GO" id="GO:0005737">
    <property type="term" value="C:cytoplasm"/>
    <property type="evidence" value="ECO:0007669"/>
    <property type="project" value="UniProtKB-SubCell"/>
</dbReference>
<dbReference type="GO" id="GO:0009379">
    <property type="term" value="C:Holliday junction helicase complex"/>
    <property type="evidence" value="ECO:0007669"/>
    <property type="project" value="InterPro"/>
</dbReference>
<dbReference type="GO" id="GO:0048476">
    <property type="term" value="C:Holliday junction resolvase complex"/>
    <property type="evidence" value="ECO:0007669"/>
    <property type="project" value="UniProtKB-UniRule"/>
</dbReference>
<dbReference type="GO" id="GO:0005524">
    <property type="term" value="F:ATP binding"/>
    <property type="evidence" value="ECO:0007669"/>
    <property type="project" value="InterPro"/>
</dbReference>
<dbReference type="GO" id="GO:0000400">
    <property type="term" value="F:four-way junction DNA binding"/>
    <property type="evidence" value="ECO:0007669"/>
    <property type="project" value="UniProtKB-UniRule"/>
</dbReference>
<dbReference type="GO" id="GO:0009378">
    <property type="term" value="F:four-way junction helicase activity"/>
    <property type="evidence" value="ECO:0000318"/>
    <property type="project" value="GO_Central"/>
</dbReference>
<dbReference type="GO" id="GO:0006310">
    <property type="term" value="P:DNA recombination"/>
    <property type="evidence" value="ECO:0007669"/>
    <property type="project" value="UniProtKB-UniRule"/>
</dbReference>
<dbReference type="GO" id="GO:0006281">
    <property type="term" value="P:DNA repair"/>
    <property type="evidence" value="ECO:0007669"/>
    <property type="project" value="UniProtKB-UniRule"/>
</dbReference>
<dbReference type="GO" id="GO:0009432">
    <property type="term" value="P:SOS response"/>
    <property type="evidence" value="ECO:0000318"/>
    <property type="project" value="GO_Central"/>
</dbReference>
<dbReference type="CDD" id="cd14332">
    <property type="entry name" value="UBA_RuvA_C"/>
    <property type="match status" value="1"/>
</dbReference>
<dbReference type="FunFam" id="1.10.150.20:FF:000012">
    <property type="entry name" value="Holliday junction ATP-dependent DNA helicase RuvA"/>
    <property type="match status" value="1"/>
</dbReference>
<dbReference type="FunFam" id="2.40.50.140:FF:000083">
    <property type="entry name" value="Holliday junction ATP-dependent DNA helicase RuvA"/>
    <property type="match status" value="1"/>
</dbReference>
<dbReference type="Gene3D" id="1.10.150.20">
    <property type="entry name" value="5' to 3' exonuclease, C-terminal subdomain"/>
    <property type="match status" value="1"/>
</dbReference>
<dbReference type="Gene3D" id="1.10.8.10">
    <property type="entry name" value="DNA helicase RuvA subunit, C-terminal domain"/>
    <property type="match status" value="1"/>
</dbReference>
<dbReference type="Gene3D" id="2.40.50.140">
    <property type="entry name" value="Nucleic acid-binding proteins"/>
    <property type="match status" value="1"/>
</dbReference>
<dbReference type="HAMAP" id="MF_00031">
    <property type="entry name" value="DNA_HJ_migration_RuvA"/>
    <property type="match status" value="1"/>
</dbReference>
<dbReference type="InterPro" id="IPR013849">
    <property type="entry name" value="DNA_helicase_Holl-junc_RuvA_I"/>
</dbReference>
<dbReference type="InterPro" id="IPR003583">
    <property type="entry name" value="Hlx-hairpin-Hlx_DNA-bd_motif"/>
</dbReference>
<dbReference type="InterPro" id="IPR012340">
    <property type="entry name" value="NA-bd_OB-fold"/>
</dbReference>
<dbReference type="InterPro" id="IPR000085">
    <property type="entry name" value="RuvA"/>
</dbReference>
<dbReference type="InterPro" id="IPR010994">
    <property type="entry name" value="RuvA_2-like"/>
</dbReference>
<dbReference type="InterPro" id="IPR011114">
    <property type="entry name" value="RuvA_C"/>
</dbReference>
<dbReference type="InterPro" id="IPR036267">
    <property type="entry name" value="RuvA_C_sf"/>
</dbReference>
<dbReference type="NCBIfam" id="TIGR00084">
    <property type="entry name" value="ruvA"/>
    <property type="match status" value="1"/>
</dbReference>
<dbReference type="Pfam" id="PF14520">
    <property type="entry name" value="HHH_5"/>
    <property type="match status" value="1"/>
</dbReference>
<dbReference type="Pfam" id="PF07499">
    <property type="entry name" value="RuvA_C"/>
    <property type="match status" value="1"/>
</dbReference>
<dbReference type="Pfam" id="PF01330">
    <property type="entry name" value="RuvA_N"/>
    <property type="match status" value="1"/>
</dbReference>
<dbReference type="SMART" id="SM00278">
    <property type="entry name" value="HhH1"/>
    <property type="match status" value="2"/>
</dbReference>
<dbReference type="SUPFAM" id="SSF46929">
    <property type="entry name" value="DNA helicase RuvA subunit, C-terminal domain"/>
    <property type="match status" value="1"/>
</dbReference>
<dbReference type="SUPFAM" id="SSF50249">
    <property type="entry name" value="Nucleic acid-binding proteins"/>
    <property type="match status" value="1"/>
</dbReference>
<dbReference type="SUPFAM" id="SSF47781">
    <property type="entry name" value="RuvA domain 2-like"/>
    <property type="match status" value="1"/>
</dbReference>
<proteinExistence type="inferred from homology"/>
<name>RUVA_VIBCH</name>
<organism>
    <name type="scientific">Vibrio cholerae serotype O1 (strain ATCC 39315 / El Tor Inaba N16961)</name>
    <dbReference type="NCBI Taxonomy" id="243277"/>
    <lineage>
        <taxon>Bacteria</taxon>
        <taxon>Pseudomonadati</taxon>
        <taxon>Pseudomonadota</taxon>
        <taxon>Gammaproteobacteria</taxon>
        <taxon>Vibrionales</taxon>
        <taxon>Vibrionaceae</taxon>
        <taxon>Vibrio</taxon>
    </lineage>
</organism>
<feature type="chain" id="PRO_0000094706" description="Holliday junction branch migration complex subunit RuvA">
    <location>
        <begin position="1"/>
        <end position="204"/>
    </location>
</feature>
<feature type="region of interest" description="Domain I" evidence="1">
    <location>
        <begin position="1"/>
        <end position="64"/>
    </location>
</feature>
<feature type="region of interest" description="Domain II" evidence="1">
    <location>
        <begin position="65"/>
        <end position="143"/>
    </location>
</feature>
<feature type="region of interest" description="Flexible linker" evidence="1">
    <location>
        <begin position="144"/>
        <end position="155"/>
    </location>
</feature>
<feature type="region of interest" description="Domain III" evidence="1">
    <location>
        <begin position="156"/>
        <end position="204"/>
    </location>
</feature>
<comment type="function">
    <text evidence="1">The RuvA-RuvB-RuvC complex processes Holliday junction (HJ) DNA during genetic recombination and DNA repair, while the RuvA-RuvB complex plays an important role in the rescue of blocked DNA replication forks via replication fork reversal (RFR). RuvA specifically binds to HJ cruciform DNA, conferring on it an open structure. The RuvB hexamer acts as an ATP-dependent pump, pulling dsDNA into and through the RuvAB complex. HJ branch migration allows RuvC to scan DNA until it finds its consensus sequence, where it cleaves and resolves the cruciform DNA.</text>
</comment>
<comment type="subunit">
    <text evidence="1">Homotetramer. Forms an RuvA(8)-RuvB(12)-Holliday junction (HJ) complex. HJ DNA is sandwiched between 2 RuvA tetramers; dsDNA enters through RuvA and exits via RuvB. An RuvB hexamer assembles on each DNA strand where it exits the tetramer. Each RuvB hexamer is contacted by two RuvA subunits (via domain III) on 2 adjacent RuvB subunits; this complex drives branch migration. In the full resolvosome a probable DNA-RuvA(4)-RuvB(12)-RuvC(2) complex forms which resolves the HJ.</text>
</comment>
<comment type="subcellular location">
    <subcellularLocation>
        <location evidence="1">Cytoplasm</location>
    </subcellularLocation>
</comment>
<comment type="domain">
    <text evidence="1">Has three domains with a flexible linker between the domains II and III and assumes an 'L' shape. Domain III is highly mobile and contacts RuvB.</text>
</comment>
<comment type="similarity">
    <text evidence="1">Belongs to the RuvA family.</text>
</comment>
<evidence type="ECO:0000255" key="1">
    <source>
        <dbReference type="HAMAP-Rule" id="MF_00031"/>
    </source>
</evidence>
<reference key="1">
    <citation type="journal article" date="2000" name="Nature">
        <title>DNA sequence of both chromosomes of the cholera pathogen Vibrio cholerae.</title>
        <authorList>
            <person name="Heidelberg J.F."/>
            <person name="Eisen J.A."/>
            <person name="Nelson W.C."/>
            <person name="Clayton R.A."/>
            <person name="Gwinn M.L."/>
            <person name="Dodson R.J."/>
            <person name="Haft D.H."/>
            <person name="Hickey E.K."/>
            <person name="Peterson J.D."/>
            <person name="Umayam L.A."/>
            <person name="Gill S.R."/>
            <person name="Nelson K.E."/>
            <person name="Read T.D."/>
            <person name="Tettelin H."/>
            <person name="Richardson D.L."/>
            <person name="Ermolaeva M.D."/>
            <person name="Vamathevan J.J."/>
            <person name="Bass S."/>
            <person name="Qin H."/>
            <person name="Dragoi I."/>
            <person name="Sellers P."/>
            <person name="McDonald L.A."/>
            <person name="Utterback T.R."/>
            <person name="Fleischmann R.D."/>
            <person name="Nierman W.C."/>
            <person name="White O."/>
            <person name="Salzberg S.L."/>
            <person name="Smith H.O."/>
            <person name="Colwell R.R."/>
            <person name="Mekalanos J.J."/>
            <person name="Venter J.C."/>
            <person name="Fraser C.M."/>
        </authorList>
    </citation>
    <scope>NUCLEOTIDE SEQUENCE [LARGE SCALE GENOMIC DNA]</scope>
    <source>
        <strain>ATCC 39315 / El Tor Inaba N16961</strain>
    </source>
</reference>
<accession>Q9KR01</accession>
<keyword id="KW-0963">Cytoplasm</keyword>
<keyword id="KW-0227">DNA damage</keyword>
<keyword id="KW-0233">DNA recombination</keyword>
<keyword id="KW-0234">DNA repair</keyword>
<keyword id="KW-0238">DNA-binding</keyword>
<keyword id="KW-1185">Reference proteome</keyword>